<feature type="signal peptide" evidence="1">
    <location>
        <begin position="1"/>
        <end position="26"/>
    </location>
</feature>
<feature type="chain" id="PRO_0000018958" description="HLA class II histocompatibility antigen, DM alpha chain">
    <location>
        <begin position="27"/>
        <end position="261"/>
    </location>
</feature>
<feature type="topological domain" description="Lumenal" evidence="1">
    <location>
        <begin position="27"/>
        <end position="233"/>
    </location>
</feature>
<feature type="transmembrane region" description="Helical" evidence="1">
    <location>
        <begin position="234"/>
        <end position="254"/>
    </location>
</feature>
<feature type="topological domain" description="Cytoplasmic" evidence="1">
    <location>
        <begin position="255"/>
        <end position="261"/>
    </location>
</feature>
<feature type="domain" description="Ig-like C1-type">
    <location>
        <begin position="121"/>
        <end position="215"/>
    </location>
</feature>
<feature type="region of interest" description="Alpha-1">
    <location>
        <begin position="27"/>
        <end position="124"/>
    </location>
</feature>
<feature type="region of interest" description="Alpha-2">
    <location>
        <begin position="125"/>
        <end position="217"/>
    </location>
</feature>
<feature type="region of interest" description="Connecting peptide" evidence="1">
    <location>
        <begin position="218"/>
        <end position="233"/>
    </location>
</feature>
<feature type="glycosylation site" description="N-linked (GlcNAc...) asparagine" evidence="3 7">
    <location>
        <position position="41"/>
    </location>
</feature>
<feature type="disulfide bond" evidence="3 7">
    <location>
        <begin position="50"/>
        <end position="105"/>
    </location>
</feature>
<feature type="disulfide bond" evidence="3 7">
    <location>
        <begin position="147"/>
        <end position="202"/>
    </location>
</feature>
<feature type="sequence variant" id="VAR_016746">
    <original>Q</original>
    <variation>H</variation>
    <location>
        <position position="162"/>
    </location>
</feature>
<feature type="sequence variant" id="VAR_016747">
    <original>H</original>
    <variation>D</variation>
    <location>
        <position position="163"/>
    </location>
</feature>
<feature type="sequence variant" id="VAR_016748" description="In allele DMA*01:02 and allele DMA*01:04; dbSNP:rs1063478.">
    <original>V</original>
    <variation>I</variation>
    <location>
        <position position="166"/>
    </location>
</feature>
<feature type="sequence variant" id="VAR_016749" description="In allele DMA*01:03; dbSNP:rs6926628.">
    <original>G</original>
    <variation>A</variation>
    <location>
        <position position="181"/>
    </location>
</feature>
<feature type="sequence variant" id="VAR_016750" description="In allele DMA*01:04; dbSNP:rs17214044.">
    <original>R</original>
    <variation>C</variation>
    <location>
        <position position="210"/>
    </location>
</feature>
<feature type="sequence variant" id="VAR_016751" description="In allele DMA*01:03; dbSNP:rs41555121.">
    <original>R</original>
    <variation>H</variation>
    <location>
        <position position="210"/>
    </location>
</feature>
<feature type="sequence variant" id="VAR_056544" description="In dbSNP:rs9469319.">
    <original>V</original>
    <variation>M</variation>
    <location>
        <position position="235"/>
    </location>
</feature>
<feature type="mutagenesis site" description="Decreases the interaction with MHCII and peptide exchange; when associated with A-220." evidence="3">
    <original>R</original>
    <variation>A</variation>
    <location>
        <position position="124"/>
    </location>
</feature>
<feature type="mutagenesis site" description="Decreases the interaction with MHCII and peptide exchange." evidence="3">
    <original>F</original>
    <variation>A</variation>
    <location>
        <position position="126"/>
    </location>
</feature>
<feature type="mutagenesis site" description="Abrogates the interaction with MHCII and peptide exchange." evidence="3">
    <original>N</original>
    <variation>A</variation>
    <variation>R</variation>
    <location>
        <position position="151"/>
    </location>
</feature>
<feature type="mutagenesis site" description="Decreases the interaction with MHCII and peptide exchange." evidence="3">
    <original>I</original>
    <variation>N</variation>
    <location>
        <position position="199"/>
    </location>
</feature>
<feature type="mutagenesis site" description="Decreases the interaction with MHCII and peptide exchange; when associated with A-124." evidence="3">
    <original>R</original>
    <variation>A</variation>
    <location>
        <position position="220"/>
    </location>
</feature>
<feature type="strand" evidence="9">
    <location>
        <begin position="41"/>
        <end position="63"/>
    </location>
</feature>
<feature type="strand" evidence="9">
    <location>
        <begin position="66"/>
        <end position="72"/>
    </location>
</feature>
<feature type="turn" evidence="9">
    <location>
        <begin position="73"/>
        <end position="76"/>
    </location>
</feature>
<feature type="strand" evidence="9">
    <location>
        <begin position="77"/>
        <end position="82"/>
    </location>
</feature>
<feature type="helix" evidence="9">
    <location>
        <begin position="83"/>
        <end position="85"/>
    </location>
</feature>
<feature type="helix" evidence="9">
    <location>
        <begin position="87"/>
        <end position="89"/>
    </location>
</feature>
<feature type="helix" evidence="9">
    <location>
        <begin position="95"/>
        <end position="110"/>
    </location>
</feature>
<feature type="turn" evidence="9">
    <location>
        <begin position="114"/>
        <end position="116"/>
    </location>
</feature>
<feature type="turn" evidence="8">
    <location>
        <begin position="117"/>
        <end position="119"/>
    </location>
</feature>
<feature type="strand" evidence="10">
    <location>
        <begin position="122"/>
        <end position="124"/>
    </location>
</feature>
<feature type="strand" evidence="9">
    <location>
        <begin position="128"/>
        <end position="135"/>
    </location>
</feature>
<feature type="strand" evidence="9">
    <location>
        <begin position="143"/>
        <end position="155"/>
    </location>
</feature>
<feature type="strand" evidence="9">
    <location>
        <begin position="157"/>
        <end position="163"/>
    </location>
</feature>
<feature type="strand" evidence="9">
    <location>
        <begin position="166"/>
        <end position="168"/>
    </location>
</feature>
<feature type="strand" evidence="9">
    <location>
        <begin position="175"/>
        <end position="179"/>
    </location>
</feature>
<feature type="turn" evidence="9">
    <location>
        <begin position="180"/>
        <end position="182"/>
    </location>
</feature>
<feature type="strand" evidence="9">
    <location>
        <begin position="183"/>
        <end position="192"/>
    </location>
</feature>
<feature type="strand" evidence="9">
    <location>
        <begin position="200"/>
        <end position="206"/>
    </location>
</feature>
<feature type="turn" evidence="9">
    <location>
        <begin position="207"/>
        <end position="210"/>
    </location>
</feature>
<feature type="strand" evidence="9">
    <location>
        <begin position="211"/>
        <end position="217"/>
    </location>
</feature>
<protein>
    <recommendedName>
        <fullName>HLA class II histocompatibility antigen, DM alpha chain</fullName>
    </recommendedName>
    <alternativeName>
        <fullName>MHC class II antigen DMA</fullName>
    </alternativeName>
    <alternativeName>
        <fullName>Really interesting new gene 6 protein</fullName>
    </alternativeName>
</protein>
<comment type="function">
    <text evidence="2 3 4 5">Plays a critical role in catalyzing the release of class II-associated invariant chain peptide (CLIP) from newly synthesized MHC class II molecules and freeing the peptide binding site for acquisition of antigenic peptides. In B-cells, the interaction between HLA-DM and MHC class II molecules is regulated by HLA-DO.</text>
</comment>
<comment type="subunit">
    <text evidence="2 3 5">Heterodimer of an alpha chain (DMA) and a beta chain (DMB) (PubMed:16547258, PubMed:9768757). Interacts with MHCII; this interaction mediates rapid selection of high-affinity peptides in a pH-dependent manner, with an optimum at pH 5.5 (PubMed:23260142).</text>
</comment>
<comment type="interaction">
    <interactant intactId="EBI-3865396">
        <id>P28067</id>
    </interactant>
    <interactant intactId="EBI-2877138">
        <id>P28068</id>
        <label>HLA-DMB</label>
    </interactant>
    <organismsDiffer>false</organismsDiffer>
    <experiments>22</experiments>
</comment>
<comment type="subcellular location">
    <subcellularLocation>
        <location>Late endosome membrane</location>
        <topology>Single-pass type I membrane protein</topology>
    </subcellularLocation>
    <subcellularLocation>
        <location>Lysosome membrane</location>
        <topology>Single-pass type I membrane protein</topology>
    </subcellularLocation>
    <text>Localizes to late endocytic compartment. Associates with lysosome membranes.</text>
</comment>
<comment type="polymorphism">
    <text evidence="6">The following alleles of DMA are known: DMA*01:01, DMA*01:02, DMA*01:03 (DMA3.2) and DMA*01:04 (DMA3.4). The sequence shown is that of DMA*01:01.</text>
</comment>
<comment type="similarity">
    <text evidence="6">Belongs to the MHC class II family.</text>
</comment>
<keyword id="KW-0002">3D-structure</keyword>
<keyword id="KW-1064">Adaptive immunity</keyword>
<keyword id="KW-1015">Disulfide bond</keyword>
<keyword id="KW-0967">Endosome</keyword>
<keyword id="KW-0325">Glycoprotein</keyword>
<keyword id="KW-0391">Immunity</keyword>
<keyword id="KW-0458">Lysosome</keyword>
<keyword id="KW-0472">Membrane</keyword>
<keyword id="KW-0491">MHC II</keyword>
<keyword id="KW-1267">Proteomics identification</keyword>
<keyword id="KW-1185">Reference proteome</keyword>
<keyword id="KW-0732">Signal</keyword>
<keyword id="KW-0812">Transmembrane</keyword>
<keyword id="KW-1133">Transmembrane helix</keyword>
<evidence type="ECO:0000255" key="1"/>
<evidence type="ECO:0000269" key="2">
    <source>
    </source>
</evidence>
<evidence type="ECO:0000269" key="3">
    <source>
    </source>
</evidence>
<evidence type="ECO:0000269" key="4">
    <source>
    </source>
</evidence>
<evidence type="ECO:0000269" key="5">
    <source>
    </source>
</evidence>
<evidence type="ECO:0000305" key="6"/>
<evidence type="ECO:0007744" key="7">
    <source>
        <dbReference type="PDB" id="4GBX"/>
    </source>
</evidence>
<evidence type="ECO:0007829" key="8">
    <source>
        <dbReference type="PDB" id="1HDM"/>
    </source>
</evidence>
<evidence type="ECO:0007829" key="9">
    <source>
        <dbReference type="PDB" id="2BC4"/>
    </source>
</evidence>
<evidence type="ECO:0007829" key="10">
    <source>
        <dbReference type="PDB" id="4FQX"/>
    </source>
</evidence>
<organism>
    <name type="scientific">Homo sapiens</name>
    <name type="common">Human</name>
    <dbReference type="NCBI Taxonomy" id="9606"/>
    <lineage>
        <taxon>Eukaryota</taxon>
        <taxon>Metazoa</taxon>
        <taxon>Chordata</taxon>
        <taxon>Craniata</taxon>
        <taxon>Vertebrata</taxon>
        <taxon>Euteleostomi</taxon>
        <taxon>Mammalia</taxon>
        <taxon>Eutheria</taxon>
        <taxon>Euarchontoglires</taxon>
        <taxon>Primates</taxon>
        <taxon>Haplorrhini</taxon>
        <taxon>Catarrhini</taxon>
        <taxon>Hominidae</taxon>
        <taxon>Homo</taxon>
    </lineage>
</organism>
<gene>
    <name type="primary">HLA-DMA</name>
    <name type="synonym">DMA</name>
    <name type="synonym">RING6</name>
</gene>
<accession>P28067</accession>
<accession>Q29639</accession>
<accession>Q29640</accession>
<dbReference type="EMBL" id="X62744">
    <property type="protein sequence ID" value="CAA44606.1"/>
    <property type="molecule type" value="mRNA"/>
</dbReference>
<dbReference type="EMBL" id="AL935042">
    <property type="status" value="NOT_ANNOTATED_CDS"/>
    <property type="molecule type" value="Genomic_DNA"/>
</dbReference>
<dbReference type="EMBL" id="Z24753">
    <property type="status" value="NOT_ANNOTATED_CDS"/>
    <property type="molecule type" value="Genomic_DNA"/>
</dbReference>
<dbReference type="EMBL" id="U04878">
    <property type="protein sequence ID" value="AAA56994.1"/>
    <property type="molecule type" value="Genomic_DNA"/>
</dbReference>
<dbReference type="EMBL" id="U04877">
    <property type="protein sequence ID" value="AAA56993.1"/>
    <property type="molecule type" value="Genomic_DNA"/>
</dbReference>
<dbReference type="CCDS" id="CCDS4761.1"/>
<dbReference type="PIR" id="I38490">
    <property type="entry name" value="I38490"/>
</dbReference>
<dbReference type="PIR" id="S17886">
    <property type="entry name" value="S17886"/>
</dbReference>
<dbReference type="RefSeq" id="NP_006111.2">
    <property type="nucleotide sequence ID" value="NM_006120.3"/>
</dbReference>
<dbReference type="PDB" id="1HDM">
    <property type="method" value="X-ray"/>
    <property type="resolution" value="2.50 A"/>
    <property type="chains" value="A=27-230"/>
</dbReference>
<dbReference type="PDB" id="2BC4">
    <property type="method" value="X-ray"/>
    <property type="resolution" value="2.27 A"/>
    <property type="chains" value="A/C=27-229"/>
</dbReference>
<dbReference type="PDB" id="4FQX">
    <property type="method" value="X-ray"/>
    <property type="resolution" value="2.60 A"/>
    <property type="chains" value="C=27-225"/>
</dbReference>
<dbReference type="PDB" id="4GBX">
    <property type="method" value="X-ray"/>
    <property type="resolution" value="3.00 A"/>
    <property type="chains" value="C=27-225"/>
</dbReference>
<dbReference type="PDBsum" id="1HDM"/>
<dbReference type="PDBsum" id="2BC4"/>
<dbReference type="PDBsum" id="4FQX"/>
<dbReference type="PDBsum" id="4GBX"/>
<dbReference type="SMR" id="P28067"/>
<dbReference type="DIP" id="DIP-6184N"/>
<dbReference type="FunCoup" id="P28067">
    <property type="interactions" value="91"/>
</dbReference>
<dbReference type="IntAct" id="P28067">
    <property type="interactions" value="10"/>
</dbReference>
<dbReference type="MINT" id="P28067"/>
<dbReference type="STRING" id="9606.ENSP00000363976"/>
<dbReference type="GlyCosmos" id="P28067">
    <property type="glycosylation" value="1 site, No reported glycans"/>
</dbReference>
<dbReference type="GlyGen" id="P28067">
    <property type="glycosylation" value="2 sites"/>
</dbReference>
<dbReference type="iPTMnet" id="P28067"/>
<dbReference type="PhosphoSitePlus" id="P28067"/>
<dbReference type="BioMuta" id="HLA-DMA"/>
<dbReference type="DMDM" id="133158"/>
<dbReference type="jPOST" id="P28067"/>
<dbReference type="MassIVE" id="P28067"/>
<dbReference type="PaxDb" id="9606-ENSP00000363976"/>
<dbReference type="PeptideAtlas" id="P28067"/>
<dbReference type="ProteomicsDB" id="54442"/>
<dbReference type="Antibodypedia" id="2402">
    <property type="antibodies" value="383 antibodies from 33 providers"/>
</dbReference>
<dbReference type="Ensembl" id="ENST00000374843.9">
    <property type="protein sequence ID" value="ENSP00000363976.4"/>
    <property type="gene ID" value="ENSG00000204257.15"/>
</dbReference>
<dbReference type="Ensembl" id="ENST00000383230.8">
    <property type="protein sequence ID" value="ENSP00000372717.4"/>
    <property type="gene ID" value="ENSG00000243215.7"/>
</dbReference>
<dbReference type="Ensembl" id="ENST00000434337.6">
    <property type="protein sequence ID" value="ENSP00000407198.2"/>
    <property type="gene ID" value="ENSG00000242361.7"/>
</dbReference>
<dbReference type="Ensembl" id="ENST00000441375.6">
    <property type="protein sequence ID" value="ENSP00000410591.2"/>
    <property type="gene ID" value="ENSG00000239463.7"/>
</dbReference>
<dbReference type="Ensembl" id="ENST00000450601.6">
    <property type="protein sequence ID" value="ENSP00000392842.2"/>
    <property type="gene ID" value="ENSG00000242685.7"/>
</dbReference>
<dbReference type="Ensembl" id="ENST00000452615.6">
    <property type="protein sequence ID" value="ENSP00000395349.2"/>
    <property type="gene ID" value="ENSG00000243189.7"/>
</dbReference>
<dbReference type="Ensembl" id="ENST00000453490.6">
    <property type="protein sequence ID" value="ENSP00000404018.2"/>
    <property type="gene ID" value="ENSG00000243719.7"/>
</dbReference>
<dbReference type="GeneID" id="3108"/>
<dbReference type="KEGG" id="hsa:3108"/>
<dbReference type="MANE-Select" id="ENST00000374843.9">
    <property type="protein sequence ID" value="ENSP00000363976.4"/>
    <property type="RefSeq nucleotide sequence ID" value="NM_006120.4"/>
    <property type="RefSeq protein sequence ID" value="NP_006111.2"/>
</dbReference>
<dbReference type="AGR" id="HGNC:4934"/>
<dbReference type="CTD" id="3108"/>
<dbReference type="GeneCards" id="HLA-DMA"/>
<dbReference type="HGNC" id="HGNC:4934">
    <property type="gene designation" value="HLA-DMA"/>
</dbReference>
<dbReference type="HPA" id="ENSG00000204257">
    <property type="expression patterns" value="Tissue enhanced (lymphoid)"/>
</dbReference>
<dbReference type="MIM" id="142855">
    <property type="type" value="gene"/>
</dbReference>
<dbReference type="neXtProt" id="NX_P28067"/>
<dbReference type="OpenTargets" id="ENSG00000204257"/>
<dbReference type="VEuPathDB" id="HostDB:ENSG00000204257"/>
<dbReference type="eggNOG" id="ENOG502S6RX">
    <property type="taxonomic scope" value="Eukaryota"/>
</dbReference>
<dbReference type="GeneTree" id="ENSGT00940000161157"/>
<dbReference type="HOGENOM" id="CLU_069380_1_0_1"/>
<dbReference type="InParanoid" id="P28067"/>
<dbReference type="OrthoDB" id="8935021at2759"/>
<dbReference type="PAN-GO" id="P28067">
    <property type="GO annotations" value="8 GO annotations based on evolutionary models"/>
</dbReference>
<dbReference type="PhylomeDB" id="P28067"/>
<dbReference type="TreeFam" id="TF333797"/>
<dbReference type="PathwayCommons" id="P28067"/>
<dbReference type="Reactome" id="R-HSA-2132295">
    <property type="pathway name" value="MHC class II antigen presentation"/>
</dbReference>
<dbReference type="SignaLink" id="P28067"/>
<dbReference type="SIGNOR" id="P28067"/>
<dbReference type="ChiTaRS" id="HLA-DMA">
    <property type="organism name" value="human"/>
</dbReference>
<dbReference type="EvolutionaryTrace" id="P28067"/>
<dbReference type="Pharos" id="P28067">
    <property type="development level" value="Tbio"/>
</dbReference>
<dbReference type="PRO" id="PR:P28067"/>
<dbReference type="Proteomes" id="UP000005640">
    <property type="component" value="Chromosome 6"/>
</dbReference>
<dbReference type="RNAct" id="P28067">
    <property type="molecule type" value="protein"/>
</dbReference>
<dbReference type="Bgee" id="ENSG00000204257">
    <property type="expression patterns" value="Expressed in granulocyte and 99 other cell types or tissues"/>
</dbReference>
<dbReference type="ExpressionAtlas" id="P28067">
    <property type="expression patterns" value="baseline and differential"/>
</dbReference>
<dbReference type="GO" id="GO:0009986">
    <property type="term" value="C:cell surface"/>
    <property type="evidence" value="ECO:0000314"/>
    <property type="project" value="UniProtKB"/>
</dbReference>
<dbReference type="GO" id="GO:0043231">
    <property type="term" value="C:intracellular membrane-bounded organelle"/>
    <property type="evidence" value="ECO:0000314"/>
    <property type="project" value="HPA"/>
</dbReference>
<dbReference type="GO" id="GO:0031902">
    <property type="term" value="C:late endosome membrane"/>
    <property type="evidence" value="ECO:0000314"/>
    <property type="project" value="UniProtKB"/>
</dbReference>
<dbReference type="GO" id="GO:0005765">
    <property type="term" value="C:lysosomal membrane"/>
    <property type="evidence" value="ECO:0000314"/>
    <property type="project" value="UniProtKB"/>
</dbReference>
<dbReference type="GO" id="GO:0016020">
    <property type="term" value="C:membrane"/>
    <property type="evidence" value="ECO:0007005"/>
    <property type="project" value="UniProtKB"/>
</dbReference>
<dbReference type="GO" id="GO:0042613">
    <property type="term" value="C:MHC class II protein complex"/>
    <property type="evidence" value="ECO:0000314"/>
    <property type="project" value="UniProtKB"/>
</dbReference>
<dbReference type="GO" id="GO:0023026">
    <property type="term" value="F:MHC class II protein complex binding"/>
    <property type="evidence" value="ECO:0000314"/>
    <property type="project" value="UniProtKB"/>
</dbReference>
<dbReference type="GO" id="GO:0042605">
    <property type="term" value="F:peptide antigen binding"/>
    <property type="evidence" value="ECO:0000318"/>
    <property type="project" value="GO_Central"/>
</dbReference>
<dbReference type="GO" id="GO:0002250">
    <property type="term" value="P:adaptive immune response"/>
    <property type="evidence" value="ECO:0007669"/>
    <property type="project" value="UniProtKB-KW"/>
</dbReference>
<dbReference type="GO" id="GO:0019886">
    <property type="term" value="P:antigen processing and presentation of exogenous peptide antigen via MHC class II"/>
    <property type="evidence" value="ECO:0000318"/>
    <property type="project" value="GO_Central"/>
</dbReference>
<dbReference type="GO" id="GO:0002503">
    <property type="term" value="P:peptide antigen assembly with MHC class II protein complex"/>
    <property type="evidence" value="ECO:0000314"/>
    <property type="project" value="UniProtKB"/>
</dbReference>
<dbReference type="GO" id="GO:0050778">
    <property type="term" value="P:positive regulation of immune response"/>
    <property type="evidence" value="ECO:0000318"/>
    <property type="project" value="GO_Central"/>
</dbReference>
<dbReference type="GO" id="GO:0050870">
    <property type="term" value="P:positive regulation of T cell activation"/>
    <property type="evidence" value="ECO:0000318"/>
    <property type="project" value="GO_Central"/>
</dbReference>
<dbReference type="CDD" id="cd21009">
    <property type="entry name" value="IgC1_MHC_II_alpha_HLA-DM"/>
    <property type="match status" value="1"/>
</dbReference>
<dbReference type="FunFam" id="2.60.40.10:FF:000790">
    <property type="entry name" value="HLA class II histocompatibility antigen, DM alpha chain"/>
    <property type="match status" value="1"/>
</dbReference>
<dbReference type="FunFam" id="3.10.320.10:FF:000003">
    <property type="entry name" value="HLA class II histocompatibility antigen, DM alpha chain"/>
    <property type="match status" value="1"/>
</dbReference>
<dbReference type="Gene3D" id="3.10.320.10">
    <property type="entry name" value="Class II Histocompatibility Antigen, M Beta Chain, Chain B, domain 1"/>
    <property type="match status" value="1"/>
</dbReference>
<dbReference type="Gene3D" id="2.60.40.10">
    <property type="entry name" value="Immunoglobulins"/>
    <property type="match status" value="1"/>
</dbReference>
<dbReference type="InterPro" id="IPR007110">
    <property type="entry name" value="Ig-like_dom"/>
</dbReference>
<dbReference type="InterPro" id="IPR036179">
    <property type="entry name" value="Ig-like_dom_sf"/>
</dbReference>
<dbReference type="InterPro" id="IPR013783">
    <property type="entry name" value="Ig-like_fold"/>
</dbReference>
<dbReference type="InterPro" id="IPR003006">
    <property type="entry name" value="Ig/MHC_CS"/>
</dbReference>
<dbReference type="InterPro" id="IPR003597">
    <property type="entry name" value="Ig_C1-set"/>
</dbReference>
<dbReference type="InterPro" id="IPR050160">
    <property type="entry name" value="MHC/Immunoglobulin"/>
</dbReference>
<dbReference type="InterPro" id="IPR011162">
    <property type="entry name" value="MHC_I/II-like_Ag-recog"/>
</dbReference>
<dbReference type="InterPro" id="IPR014745">
    <property type="entry name" value="MHC_II_a/b_N"/>
</dbReference>
<dbReference type="InterPro" id="IPR001003">
    <property type="entry name" value="MHC_II_a_N"/>
</dbReference>
<dbReference type="PANTHER" id="PTHR19944:SF50">
    <property type="entry name" value="HLA CLASS II HISTOCOMPATIBILITY ANTIGEN, DM ALPHA CHAIN"/>
    <property type="match status" value="1"/>
</dbReference>
<dbReference type="PANTHER" id="PTHR19944">
    <property type="entry name" value="MHC CLASS II-RELATED"/>
    <property type="match status" value="1"/>
</dbReference>
<dbReference type="Pfam" id="PF07654">
    <property type="entry name" value="C1-set"/>
    <property type="match status" value="1"/>
</dbReference>
<dbReference type="Pfam" id="PF00993">
    <property type="entry name" value="MHC_II_alpha"/>
    <property type="match status" value="1"/>
</dbReference>
<dbReference type="SMART" id="SM00407">
    <property type="entry name" value="IGc1"/>
    <property type="match status" value="1"/>
</dbReference>
<dbReference type="SMART" id="SM00920">
    <property type="entry name" value="MHC_II_alpha"/>
    <property type="match status" value="1"/>
</dbReference>
<dbReference type="SUPFAM" id="SSF48726">
    <property type="entry name" value="Immunoglobulin"/>
    <property type="match status" value="1"/>
</dbReference>
<dbReference type="SUPFAM" id="SSF54452">
    <property type="entry name" value="MHC antigen-recognition domain"/>
    <property type="match status" value="1"/>
</dbReference>
<dbReference type="PROSITE" id="PS50835">
    <property type="entry name" value="IG_LIKE"/>
    <property type="match status" value="1"/>
</dbReference>
<dbReference type="PROSITE" id="PS00290">
    <property type="entry name" value="IG_MHC"/>
    <property type="match status" value="1"/>
</dbReference>
<name>DMA_HUMAN</name>
<proteinExistence type="evidence at protein level"/>
<sequence>MGHEQNQGAALLQMLPLLWLLPHSWAVPEAPTPMWPDDLQNHTFLHTVYCQDGSPSVGLSEAYDEDQLFFFDFSQNTRVPRLPEFADWAQEQGDAPAILFDKEFCEWMIQQIGPKLDGKIPVSRGFPIAEVFTLKPLEFGKPNTLVCFVSNLFPPMLTVNWQHHSVPVEGFGPTFVSAVDGLSFQAFSYLNFTPEPSDIFSCIVTHEIDRYTAIAYWVPRNALPSDLLENVLCGVAFGLGVLGIIVGIVLIIYFRKPCSGD</sequence>
<reference key="1">
    <citation type="journal article" date="1991" name="Nature">
        <title>A new human HLA class II-related locus, DM.</title>
        <authorList>
            <person name="Kelly A.P."/>
            <person name="Monaco J.J."/>
            <person name="Cho S."/>
            <person name="Trowsdale J."/>
        </authorList>
    </citation>
    <scope>NUCLEOTIDE SEQUENCE [MRNA] (ALLELE DMA*01:01)</scope>
</reference>
<reference key="2">
    <citation type="journal article" date="2003" name="Nature">
        <title>The DNA sequence and analysis of human chromosome 6.</title>
        <authorList>
            <person name="Mungall A.J."/>
            <person name="Palmer S.A."/>
            <person name="Sims S.K."/>
            <person name="Edwards C.A."/>
            <person name="Ashurst J.L."/>
            <person name="Wilming L."/>
            <person name="Jones M.C."/>
            <person name="Horton R."/>
            <person name="Hunt S.E."/>
            <person name="Scott C.E."/>
            <person name="Gilbert J.G.R."/>
            <person name="Clamp M.E."/>
            <person name="Bethel G."/>
            <person name="Milne S."/>
            <person name="Ainscough R."/>
            <person name="Almeida J.P."/>
            <person name="Ambrose K.D."/>
            <person name="Andrews T.D."/>
            <person name="Ashwell R.I.S."/>
            <person name="Babbage A.K."/>
            <person name="Bagguley C.L."/>
            <person name="Bailey J."/>
            <person name="Banerjee R."/>
            <person name="Barker D.J."/>
            <person name="Barlow K.F."/>
            <person name="Bates K."/>
            <person name="Beare D.M."/>
            <person name="Beasley H."/>
            <person name="Beasley O."/>
            <person name="Bird C.P."/>
            <person name="Blakey S.E."/>
            <person name="Bray-Allen S."/>
            <person name="Brook J."/>
            <person name="Brown A.J."/>
            <person name="Brown J.Y."/>
            <person name="Burford D.C."/>
            <person name="Burrill W."/>
            <person name="Burton J."/>
            <person name="Carder C."/>
            <person name="Carter N.P."/>
            <person name="Chapman J.C."/>
            <person name="Clark S.Y."/>
            <person name="Clark G."/>
            <person name="Clee C.M."/>
            <person name="Clegg S."/>
            <person name="Cobley V."/>
            <person name="Collier R.E."/>
            <person name="Collins J.E."/>
            <person name="Colman L.K."/>
            <person name="Corby N.R."/>
            <person name="Coville G.J."/>
            <person name="Culley K.M."/>
            <person name="Dhami P."/>
            <person name="Davies J."/>
            <person name="Dunn M."/>
            <person name="Earthrowl M.E."/>
            <person name="Ellington A.E."/>
            <person name="Evans K.A."/>
            <person name="Faulkner L."/>
            <person name="Francis M.D."/>
            <person name="Frankish A."/>
            <person name="Frankland J."/>
            <person name="French L."/>
            <person name="Garner P."/>
            <person name="Garnett J."/>
            <person name="Ghori M.J."/>
            <person name="Gilby L.M."/>
            <person name="Gillson C.J."/>
            <person name="Glithero R.J."/>
            <person name="Grafham D.V."/>
            <person name="Grant M."/>
            <person name="Gribble S."/>
            <person name="Griffiths C."/>
            <person name="Griffiths M.N.D."/>
            <person name="Hall R."/>
            <person name="Halls K.S."/>
            <person name="Hammond S."/>
            <person name="Harley J.L."/>
            <person name="Hart E.A."/>
            <person name="Heath P.D."/>
            <person name="Heathcott R."/>
            <person name="Holmes S.J."/>
            <person name="Howden P.J."/>
            <person name="Howe K.L."/>
            <person name="Howell G.R."/>
            <person name="Huckle E."/>
            <person name="Humphray S.J."/>
            <person name="Humphries M.D."/>
            <person name="Hunt A.R."/>
            <person name="Johnson C.M."/>
            <person name="Joy A.A."/>
            <person name="Kay M."/>
            <person name="Keenan S.J."/>
            <person name="Kimberley A.M."/>
            <person name="King A."/>
            <person name="Laird G.K."/>
            <person name="Langford C."/>
            <person name="Lawlor S."/>
            <person name="Leongamornlert D.A."/>
            <person name="Leversha M."/>
            <person name="Lloyd C.R."/>
            <person name="Lloyd D.M."/>
            <person name="Loveland J.E."/>
            <person name="Lovell J."/>
            <person name="Martin S."/>
            <person name="Mashreghi-Mohammadi M."/>
            <person name="Maslen G.L."/>
            <person name="Matthews L."/>
            <person name="McCann O.T."/>
            <person name="McLaren S.J."/>
            <person name="McLay K."/>
            <person name="McMurray A."/>
            <person name="Moore M.J.F."/>
            <person name="Mullikin J.C."/>
            <person name="Niblett D."/>
            <person name="Nickerson T."/>
            <person name="Novik K.L."/>
            <person name="Oliver K."/>
            <person name="Overton-Larty E.K."/>
            <person name="Parker A."/>
            <person name="Patel R."/>
            <person name="Pearce A.V."/>
            <person name="Peck A.I."/>
            <person name="Phillimore B.J.C.T."/>
            <person name="Phillips S."/>
            <person name="Plumb R.W."/>
            <person name="Porter K.M."/>
            <person name="Ramsey Y."/>
            <person name="Ranby S.A."/>
            <person name="Rice C.M."/>
            <person name="Ross M.T."/>
            <person name="Searle S.M."/>
            <person name="Sehra H.K."/>
            <person name="Sheridan E."/>
            <person name="Skuce C.D."/>
            <person name="Smith S."/>
            <person name="Smith M."/>
            <person name="Spraggon L."/>
            <person name="Squares S.L."/>
            <person name="Steward C.A."/>
            <person name="Sycamore N."/>
            <person name="Tamlyn-Hall G."/>
            <person name="Tester J."/>
            <person name="Theaker A.J."/>
            <person name="Thomas D.W."/>
            <person name="Thorpe A."/>
            <person name="Tracey A."/>
            <person name="Tromans A."/>
            <person name="Tubby B."/>
            <person name="Wall M."/>
            <person name="Wallis J.M."/>
            <person name="West A.P."/>
            <person name="White S.S."/>
            <person name="Whitehead S.L."/>
            <person name="Whittaker H."/>
            <person name="Wild A."/>
            <person name="Willey D.J."/>
            <person name="Wilmer T.E."/>
            <person name="Wood J.M."/>
            <person name="Wray P.W."/>
            <person name="Wyatt J.C."/>
            <person name="Young L."/>
            <person name="Younger R.M."/>
            <person name="Bentley D.R."/>
            <person name="Coulson A."/>
            <person name="Durbin R.M."/>
            <person name="Hubbard T."/>
            <person name="Sulston J.E."/>
            <person name="Dunham I."/>
            <person name="Rogers J."/>
            <person name="Beck S."/>
        </authorList>
    </citation>
    <scope>NUCLEOTIDE SEQUENCE [LARGE SCALE GENOMIC DNA] (ALLELE DMA*01:01)</scope>
</reference>
<reference key="3">
    <citation type="journal article" date="1994" name="Immunogenetics">
        <title>Limited polymorphism in HLA-DM does not involve the peptide binding groove.</title>
        <authorList>
            <person name="Sanderson F."/>
            <person name="Powis S.H."/>
            <person name="Kelly A.P."/>
            <person name="Trowsdale J."/>
        </authorList>
    </citation>
    <scope>NUCLEOTIDE SEQUENCE [GENOMIC DNA] OF 31-218 (ALLELE DMA*01:02)</scope>
</reference>
<reference key="4">
    <citation type="journal article" date="1994" name="Immunogenetics">
        <title>Sequence analysis of two novel HLA-DMA alleles.</title>
        <authorList>
            <person name="Carrington M."/>
            <person name="Harding A."/>
        </authorList>
    </citation>
    <scope>NUCLEOTIDE SEQUENCE [GENOMIC DNA] OF 125-217 (ALLELES DMA*01:03 AND DMA*01:04)</scope>
</reference>
<reference key="5">
    <citation type="journal article" date="1996" name="Science">
        <title>Enhanced dissociation of HLA-DR-bound peptides in the presence of HLA-DM.</title>
        <authorList>
            <person name="Weber D.A."/>
            <person name="Evavold B.D."/>
            <person name="Jensen P.E."/>
        </authorList>
    </citation>
    <scope>FUNCTION</scope>
</reference>
<reference key="6">
    <citation type="journal article" date="1998" name="Immunity">
        <title>The structure of HLA-DM, the peptide exchange catalyst that loads antigen onto class II MHC molecules during antigen presentation.</title>
        <authorList>
            <person name="Mosyak L."/>
            <person name="Zaller D.M."/>
            <person name="Wiley D.C."/>
        </authorList>
    </citation>
    <scope>X-RAY CRYSTALLOGRAPHY (2.5 ANGSTROMS) OF 27-230 IN COMPLEX WITH DMB</scope>
    <scope>FUNCTION</scope>
    <scope>SUBUNIT</scope>
    <scope>DISULFIDE BONDS</scope>
</reference>
<reference key="7">
    <citation type="journal article" date="2006" name="J. Immunol.">
        <title>Small molecules that enhance the catalytic efficiency of HLA-DM.</title>
        <authorList>
            <person name="Nicholson M.J."/>
            <person name="Moradi B."/>
            <person name="Seth N.P."/>
            <person name="Xing X."/>
            <person name="Cuny G.D."/>
            <person name="Stein R.L."/>
            <person name="Wucherpfennig K.W."/>
        </authorList>
    </citation>
    <scope>X-RAY CRYSTALLOGRAPHY (2.27 ANGSTROMS) OF 27-229 IN COMPLEX WITH DMB</scope>
    <scope>FUNCTION</scope>
    <scope>SUBUNIT</scope>
    <scope>DISULFIDE BONDS</scope>
</reference>
<reference key="8">
    <citation type="journal article" date="2012" name="Cell">
        <title>Crystal structure of the HLA-DM-HLA-DR1 complex defines mechanisms for rapid peptide selection.</title>
        <authorList>
            <person name="Pos W."/>
            <person name="Sethi D.K."/>
            <person name="Call M.J."/>
            <person name="Schulze M.S."/>
            <person name="Anders A.K."/>
            <person name="Pyrdol J."/>
            <person name="Wucherpfennig K.W."/>
        </authorList>
    </citation>
    <scope>X-RAY CRYSTALLOGRAPHY (2.60 ANGSTROMS) OF 27-225 IN COMPLEX WITH MHCII</scope>
    <scope>SUBUNIT</scope>
    <scope>DISULFIDE BOND</scope>
    <scope>GLYCOSYLATION AT ASN-41</scope>
    <scope>FUNCTION</scope>
    <scope>MUTAGENESIS OF ARG-124; PHE-126; ASN-151; ILE-199 AND ARG-220</scope>
</reference>